<keyword id="KW-0067">ATP-binding</keyword>
<keyword id="KW-0963">Cytoplasm</keyword>
<keyword id="KW-0418">Kinase</keyword>
<keyword id="KW-0545">Nucleotide biosynthesis</keyword>
<keyword id="KW-0547">Nucleotide-binding</keyword>
<keyword id="KW-0808">Transferase</keyword>
<gene>
    <name evidence="1" type="primary">adk</name>
    <name type="ordered locus">XAC3437</name>
</gene>
<feature type="chain" id="PRO_0000158889" description="Adenylate kinase">
    <location>
        <begin position="1"/>
        <end position="187"/>
    </location>
</feature>
<feature type="region of interest" description="NMP" evidence="1">
    <location>
        <begin position="30"/>
        <end position="59"/>
    </location>
</feature>
<feature type="region of interest" description="LID" evidence="1">
    <location>
        <begin position="126"/>
        <end position="136"/>
    </location>
</feature>
<feature type="binding site" evidence="1">
    <location>
        <begin position="10"/>
        <end position="15"/>
    </location>
    <ligand>
        <name>ATP</name>
        <dbReference type="ChEBI" id="CHEBI:30616"/>
    </ligand>
</feature>
<feature type="binding site" evidence="1">
    <location>
        <position position="31"/>
    </location>
    <ligand>
        <name>AMP</name>
        <dbReference type="ChEBI" id="CHEBI:456215"/>
    </ligand>
</feature>
<feature type="binding site" evidence="1">
    <location>
        <position position="36"/>
    </location>
    <ligand>
        <name>AMP</name>
        <dbReference type="ChEBI" id="CHEBI:456215"/>
    </ligand>
</feature>
<feature type="binding site" evidence="1">
    <location>
        <begin position="57"/>
        <end position="59"/>
    </location>
    <ligand>
        <name>AMP</name>
        <dbReference type="ChEBI" id="CHEBI:456215"/>
    </ligand>
</feature>
<feature type="binding site" evidence="1">
    <location>
        <begin position="85"/>
        <end position="88"/>
    </location>
    <ligand>
        <name>AMP</name>
        <dbReference type="ChEBI" id="CHEBI:456215"/>
    </ligand>
</feature>
<feature type="binding site" evidence="1">
    <location>
        <position position="92"/>
    </location>
    <ligand>
        <name>AMP</name>
        <dbReference type="ChEBI" id="CHEBI:456215"/>
    </ligand>
</feature>
<feature type="binding site" evidence="1">
    <location>
        <position position="127"/>
    </location>
    <ligand>
        <name>ATP</name>
        <dbReference type="ChEBI" id="CHEBI:30616"/>
    </ligand>
</feature>
<feature type="binding site" evidence="1">
    <location>
        <position position="133"/>
    </location>
    <ligand>
        <name>AMP</name>
        <dbReference type="ChEBI" id="CHEBI:456215"/>
    </ligand>
</feature>
<feature type="binding site" evidence="1">
    <location>
        <position position="144"/>
    </location>
    <ligand>
        <name>AMP</name>
        <dbReference type="ChEBI" id="CHEBI:456215"/>
    </ligand>
</feature>
<feature type="binding site" evidence="1">
    <location>
        <position position="172"/>
    </location>
    <ligand>
        <name>ATP</name>
        <dbReference type="ChEBI" id="CHEBI:30616"/>
    </ligand>
</feature>
<comment type="function">
    <text evidence="1">Catalyzes the reversible transfer of the terminal phosphate group between ATP and AMP. Plays an important role in cellular energy homeostasis and in adenine nucleotide metabolism.</text>
</comment>
<comment type="catalytic activity">
    <reaction evidence="1">
        <text>AMP + ATP = 2 ADP</text>
        <dbReference type="Rhea" id="RHEA:12973"/>
        <dbReference type="ChEBI" id="CHEBI:30616"/>
        <dbReference type="ChEBI" id="CHEBI:456215"/>
        <dbReference type="ChEBI" id="CHEBI:456216"/>
        <dbReference type="EC" id="2.7.4.3"/>
    </reaction>
</comment>
<comment type="pathway">
    <text evidence="1">Purine metabolism; AMP biosynthesis via salvage pathway; AMP from ADP: step 1/1.</text>
</comment>
<comment type="subunit">
    <text evidence="1">Monomer.</text>
</comment>
<comment type="subcellular location">
    <subcellularLocation>
        <location evidence="1">Cytoplasm</location>
    </subcellularLocation>
</comment>
<comment type="domain">
    <text evidence="1">Consists of three domains, a large central CORE domain and two small peripheral domains, NMPbind and LID, which undergo movements during catalysis. The LID domain closes over the site of phosphoryl transfer upon ATP binding. Assembling and dissambling the active center during each catalytic cycle provides an effective means to prevent ATP hydrolysis.</text>
</comment>
<comment type="similarity">
    <text evidence="1">Belongs to the adenylate kinase family.</text>
</comment>
<name>KAD_XANAC</name>
<evidence type="ECO:0000255" key="1">
    <source>
        <dbReference type="HAMAP-Rule" id="MF_00235"/>
    </source>
</evidence>
<proteinExistence type="inferred from homology"/>
<protein>
    <recommendedName>
        <fullName evidence="1">Adenylate kinase</fullName>
        <shortName evidence="1">AK</shortName>
        <ecNumber evidence="1">2.7.4.3</ecNumber>
    </recommendedName>
    <alternativeName>
        <fullName evidence="1">ATP-AMP transphosphorylase</fullName>
    </alternativeName>
    <alternativeName>
        <fullName evidence="1">ATP:AMP phosphotransferase</fullName>
    </alternativeName>
    <alternativeName>
        <fullName evidence="1">Adenylate monophosphate kinase</fullName>
    </alternativeName>
</protein>
<reference key="1">
    <citation type="journal article" date="2002" name="Nature">
        <title>Comparison of the genomes of two Xanthomonas pathogens with differing host specificities.</title>
        <authorList>
            <person name="da Silva A.C.R."/>
            <person name="Ferro J.A."/>
            <person name="Reinach F.C."/>
            <person name="Farah C.S."/>
            <person name="Furlan L.R."/>
            <person name="Quaggio R.B."/>
            <person name="Monteiro-Vitorello C.B."/>
            <person name="Van Sluys M.A."/>
            <person name="Almeida N.F. Jr."/>
            <person name="Alves L.M.C."/>
            <person name="do Amaral A.M."/>
            <person name="Bertolini M.C."/>
            <person name="Camargo L.E.A."/>
            <person name="Camarotte G."/>
            <person name="Cannavan F."/>
            <person name="Cardozo J."/>
            <person name="Chambergo F."/>
            <person name="Ciapina L.P."/>
            <person name="Cicarelli R.M.B."/>
            <person name="Coutinho L.L."/>
            <person name="Cursino-Santos J.R."/>
            <person name="El-Dorry H."/>
            <person name="Faria J.B."/>
            <person name="Ferreira A.J.S."/>
            <person name="Ferreira R.C.C."/>
            <person name="Ferro M.I.T."/>
            <person name="Formighieri E.F."/>
            <person name="Franco M.C."/>
            <person name="Greggio C.C."/>
            <person name="Gruber A."/>
            <person name="Katsuyama A.M."/>
            <person name="Kishi L.T."/>
            <person name="Leite R.P."/>
            <person name="Lemos E.G.M."/>
            <person name="Lemos M.V.F."/>
            <person name="Locali E.C."/>
            <person name="Machado M.A."/>
            <person name="Madeira A.M.B.N."/>
            <person name="Martinez-Rossi N.M."/>
            <person name="Martins E.C."/>
            <person name="Meidanis J."/>
            <person name="Menck C.F.M."/>
            <person name="Miyaki C.Y."/>
            <person name="Moon D.H."/>
            <person name="Moreira L.M."/>
            <person name="Novo M.T.M."/>
            <person name="Okura V.K."/>
            <person name="Oliveira M.C."/>
            <person name="Oliveira V.R."/>
            <person name="Pereira H.A."/>
            <person name="Rossi A."/>
            <person name="Sena J.A.D."/>
            <person name="Silva C."/>
            <person name="de Souza R.F."/>
            <person name="Spinola L.A.F."/>
            <person name="Takita M.A."/>
            <person name="Tamura R.E."/>
            <person name="Teixeira E.C."/>
            <person name="Tezza R.I.D."/>
            <person name="Trindade dos Santos M."/>
            <person name="Truffi D."/>
            <person name="Tsai S.M."/>
            <person name="White F.F."/>
            <person name="Setubal J.C."/>
            <person name="Kitajima J.P."/>
        </authorList>
    </citation>
    <scope>NUCLEOTIDE SEQUENCE [LARGE SCALE GENOMIC DNA]</scope>
    <source>
        <strain>306</strain>
    </source>
</reference>
<sequence length="187" mass="19955">MRLVLLGPPGSGKGTQATRLKDTFDIPHISTGDLLRAEVAAGSPLGLKAKEVMARGDLVSDDILLGMLEARLGQADVAKGFILDGYPRNVAQANALDELLGKIGQPLDAVVQLDVASELLVERIAGRAKAEGREDDNPESVRKRLQVYTDSTAPVIGFYEQRGKLARVDGVGSLDEVLERISKALGR</sequence>
<dbReference type="EC" id="2.7.4.3" evidence="1"/>
<dbReference type="EMBL" id="AE008923">
    <property type="protein sequence ID" value="AAM38280.1"/>
    <property type="molecule type" value="Genomic_DNA"/>
</dbReference>
<dbReference type="RefSeq" id="WP_003483308.1">
    <property type="nucleotide sequence ID" value="NC_003919.1"/>
</dbReference>
<dbReference type="SMR" id="Q8PH23"/>
<dbReference type="KEGG" id="xac:XAC3437"/>
<dbReference type="eggNOG" id="COG0563">
    <property type="taxonomic scope" value="Bacteria"/>
</dbReference>
<dbReference type="HOGENOM" id="CLU_032354_4_1_6"/>
<dbReference type="UniPathway" id="UPA00588">
    <property type="reaction ID" value="UER00649"/>
</dbReference>
<dbReference type="Proteomes" id="UP000000576">
    <property type="component" value="Chromosome"/>
</dbReference>
<dbReference type="GO" id="GO:0005737">
    <property type="term" value="C:cytoplasm"/>
    <property type="evidence" value="ECO:0007669"/>
    <property type="project" value="UniProtKB-SubCell"/>
</dbReference>
<dbReference type="GO" id="GO:0004017">
    <property type="term" value="F:adenylate kinase activity"/>
    <property type="evidence" value="ECO:0007669"/>
    <property type="project" value="UniProtKB-UniRule"/>
</dbReference>
<dbReference type="GO" id="GO:0005524">
    <property type="term" value="F:ATP binding"/>
    <property type="evidence" value="ECO:0007669"/>
    <property type="project" value="UniProtKB-UniRule"/>
</dbReference>
<dbReference type="GO" id="GO:0044209">
    <property type="term" value="P:AMP salvage"/>
    <property type="evidence" value="ECO:0007669"/>
    <property type="project" value="UniProtKB-UniRule"/>
</dbReference>
<dbReference type="CDD" id="cd01428">
    <property type="entry name" value="ADK"/>
    <property type="match status" value="1"/>
</dbReference>
<dbReference type="Gene3D" id="3.40.50.300">
    <property type="entry name" value="P-loop containing nucleotide triphosphate hydrolases"/>
    <property type="match status" value="1"/>
</dbReference>
<dbReference type="HAMAP" id="MF_00235">
    <property type="entry name" value="Adenylate_kinase_Adk"/>
    <property type="match status" value="1"/>
</dbReference>
<dbReference type="InterPro" id="IPR000850">
    <property type="entry name" value="Adenylat/UMP-CMP_kin"/>
</dbReference>
<dbReference type="InterPro" id="IPR033690">
    <property type="entry name" value="Adenylat_kinase_CS"/>
</dbReference>
<dbReference type="InterPro" id="IPR027417">
    <property type="entry name" value="P-loop_NTPase"/>
</dbReference>
<dbReference type="NCBIfam" id="NF001381">
    <property type="entry name" value="PRK00279.1-3"/>
    <property type="match status" value="1"/>
</dbReference>
<dbReference type="NCBIfam" id="NF011100">
    <property type="entry name" value="PRK14527.1"/>
    <property type="match status" value="1"/>
</dbReference>
<dbReference type="NCBIfam" id="NF011101">
    <property type="entry name" value="PRK14528.1"/>
    <property type="match status" value="1"/>
</dbReference>
<dbReference type="NCBIfam" id="NF011104">
    <property type="entry name" value="PRK14531.1"/>
    <property type="match status" value="1"/>
</dbReference>
<dbReference type="NCBIfam" id="NF011105">
    <property type="entry name" value="PRK14532.1"/>
    <property type="match status" value="1"/>
</dbReference>
<dbReference type="PANTHER" id="PTHR23359">
    <property type="entry name" value="NUCLEOTIDE KINASE"/>
    <property type="match status" value="1"/>
</dbReference>
<dbReference type="Pfam" id="PF00406">
    <property type="entry name" value="ADK"/>
    <property type="match status" value="1"/>
</dbReference>
<dbReference type="PRINTS" id="PR00094">
    <property type="entry name" value="ADENYLTKNASE"/>
</dbReference>
<dbReference type="SUPFAM" id="SSF52540">
    <property type="entry name" value="P-loop containing nucleoside triphosphate hydrolases"/>
    <property type="match status" value="1"/>
</dbReference>
<dbReference type="PROSITE" id="PS00113">
    <property type="entry name" value="ADENYLATE_KINASE"/>
    <property type="match status" value="1"/>
</dbReference>
<accession>Q8PH23</accession>
<organism>
    <name type="scientific">Xanthomonas axonopodis pv. citri (strain 306)</name>
    <dbReference type="NCBI Taxonomy" id="190486"/>
    <lineage>
        <taxon>Bacteria</taxon>
        <taxon>Pseudomonadati</taxon>
        <taxon>Pseudomonadota</taxon>
        <taxon>Gammaproteobacteria</taxon>
        <taxon>Lysobacterales</taxon>
        <taxon>Lysobacteraceae</taxon>
        <taxon>Xanthomonas</taxon>
    </lineage>
</organism>